<reference key="1">
    <citation type="journal article" date="2008" name="J. Bacteriol.">
        <title>The complete genome sequence of Escherichia coli DH10B: insights into the biology of a laboratory workhorse.</title>
        <authorList>
            <person name="Durfee T."/>
            <person name="Nelson R."/>
            <person name="Baldwin S."/>
            <person name="Plunkett G. III"/>
            <person name="Burland V."/>
            <person name="Mau B."/>
            <person name="Petrosino J.F."/>
            <person name="Qin X."/>
            <person name="Muzny D.M."/>
            <person name="Ayele M."/>
            <person name="Gibbs R.A."/>
            <person name="Csorgo B."/>
            <person name="Posfai G."/>
            <person name="Weinstock G.M."/>
            <person name="Blattner F.R."/>
        </authorList>
    </citation>
    <scope>NUCLEOTIDE SEQUENCE [LARGE SCALE GENOMIC DNA]</scope>
    <source>
        <strain>K12 / DH10B</strain>
    </source>
</reference>
<dbReference type="EMBL" id="CP000948">
    <property type="protein sequence ID" value="ACB04368.1"/>
    <property type="molecule type" value="Genomic_DNA"/>
</dbReference>
<dbReference type="RefSeq" id="WP_000062611.1">
    <property type="nucleotide sequence ID" value="NC_010473.1"/>
</dbReference>
<dbReference type="SMR" id="B1X6F8"/>
<dbReference type="GeneID" id="93778681"/>
<dbReference type="KEGG" id="ecd:ECDH10B_3481"/>
<dbReference type="HOGENOM" id="CLU_098428_0_0_6"/>
<dbReference type="GO" id="GO:1990904">
    <property type="term" value="C:ribonucleoprotein complex"/>
    <property type="evidence" value="ECO:0007669"/>
    <property type="project" value="UniProtKB-KW"/>
</dbReference>
<dbReference type="GO" id="GO:0005840">
    <property type="term" value="C:ribosome"/>
    <property type="evidence" value="ECO:0007669"/>
    <property type="project" value="UniProtKB-KW"/>
</dbReference>
<dbReference type="GO" id="GO:0019843">
    <property type="term" value="F:rRNA binding"/>
    <property type="evidence" value="ECO:0007669"/>
    <property type="project" value="UniProtKB-UniRule"/>
</dbReference>
<dbReference type="GO" id="GO:0003735">
    <property type="term" value="F:structural constituent of ribosome"/>
    <property type="evidence" value="ECO:0007669"/>
    <property type="project" value="InterPro"/>
</dbReference>
<dbReference type="GO" id="GO:0006412">
    <property type="term" value="P:translation"/>
    <property type="evidence" value="ECO:0007669"/>
    <property type="project" value="UniProtKB-UniRule"/>
</dbReference>
<dbReference type="FunFam" id="3.30.1370.30:FF:000003">
    <property type="entry name" value="30S ribosomal protein S8"/>
    <property type="match status" value="1"/>
</dbReference>
<dbReference type="FunFam" id="3.30.1490.10:FF:000001">
    <property type="entry name" value="30S ribosomal protein S8"/>
    <property type="match status" value="1"/>
</dbReference>
<dbReference type="Gene3D" id="3.30.1370.30">
    <property type="match status" value="1"/>
</dbReference>
<dbReference type="Gene3D" id="3.30.1490.10">
    <property type="match status" value="1"/>
</dbReference>
<dbReference type="HAMAP" id="MF_01302_B">
    <property type="entry name" value="Ribosomal_uS8_B"/>
    <property type="match status" value="1"/>
</dbReference>
<dbReference type="InterPro" id="IPR000630">
    <property type="entry name" value="Ribosomal_uS8"/>
</dbReference>
<dbReference type="InterPro" id="IPR047863">
    <property type="entry name" value="Ribosomal_uS8_CS"/>
</dbReference>
<dbReference type="InterPro" id="IPR035987">
    <property type="entry name" value="Ribosomal_uS8_sf"/>
</dbReference>
<dbReference type="NCBIfam" id="NF001109">
    <property type="entry name" value="PRK00136.1"/>
    <property type="match status" value="1"/>
</dbReference>
<dbReference type="PANTHER" id="PTHR11758">
    <property type="entry name" value="40S RIBOSOMAL PROTEIN S15A"/>
    <property type="match status" value="1"/>
</dbReference>
<dbReference type="Pfam" id="PF00410">
    <property type="entry name" value="Ribosomal_S8"/>
    <property type="match status" value="1"/>
</dbReference>
<dbReference type="SUPFAM" id="SSF56047">
    <property type="entry name" value="Ribosomal protein S8"/>
    <property type="match status" value="1"/>
</dbReference>
<dbReference type="PROSITE" id="PS00053">
    <property type="entry name" value="RIBOSOMAL_S8"/>
    <property type="match status" value="1"/>
</dbReference>
<proteinExistence type="inferred from homology"/>
<gene>
    <name evidence="1" type="primary">rpsH</name>
    <name type="ordered locus">ECDH10B_3481</name>
</gene>
<evidence type="ECO:0000255" key="1">
    <source>
        <dbReference type="HAMAP-Rule" id="MF_01302"/>
    </source>
</evidence>
<evidence type="ECO:0000305" key="2"/>
<organism>
    <name type="scientific">Escherichia coli (strain K12 / DH10B)</name>
    <dbReference type="NCBI Taxonomy" id="316385"/>
    <lineage>
        <taxon>Bacteria</taxon>
        <taxon>Pseudomonadati</taxon>
        <taxon>Pseudomonadota</taxon>
        <taxon>Gammaproteobacteria</taxon>
        <taxon>Enterobacterales</taxon>
        <taxon>Enterobacteriaceae</taxon>
        <taxon>Escherichia</taxon>
    </lineage>
</organism>
<sequence length="130" mass="14127">MSMQDPIADMLTRIRNGQAANKAAVTMPSSKLKVAIANVLKEEGFIEDFKVEGDTKPELELTLKYFQGKAVVESIQRVSRPGLRIYKRKDELPKVMAGLGIAVVSTSKGVMTDRAARQAGLGGEIICYVA</sequence>
<keyword id="KW-0687">Ribonucleoprotein</keyword>
<keyword id="KW-0689">Ribosomal protein</keyword>
<keyword id="KW-0694">RNA-binding</keyword>
<keyword id="KW-0699">rRNA-binding</keyword>
<name>RS8_ECODH</name>
<comment type="function">
    <text evidence="1">One of the primary rRNA binding proteins, it binds directly to 16S rRNA central domain where it helps coordinate assembly of the platform of the 30S subunit.</text>
</comment>
<comment type="subunit">
    <text evidence="1">Part of the 30S ribosomal subunit. Contacts proteins S5 and S12.</text>
</comment>
<comment type="similarity">
    <text evidence="1">Belongs to the universal ribosomal protein uS8 family.</text>
</comment>
<feature type="chain" id="PRO_1000140551" description="Small ribosomal subunit protein uS8">
    <location>
        <begin position="1"/>
        <end position="130"/>
    </location>
</feature>
<protein>
    <recommendedName>
        <fullName evidence="1">Small ribosomal subunit protein uS8</fullName>
    </recommendedName>
    <alternativeName>
        <fullName evidence="2">30S ribosomal protein S8</fullName>
    </alternativeName>
</protein>
<accession>B1X6F8</accession>